<organism>
    <name type="scientific">Arabidopsis thaliana</name>
    <name type="common">Mouse-ear cress</name>
    <dbReference type="NCBI Taxonomy" id="3702"/>
    <lineage>
        <taxon>Eukaryota</taxon>
        <taxon>Viridiplantae</taxon>
        <taxon>Streptophyta</taxon>
        <taxon>Embryophyta</taxon>
        <taxon>Tracheophyta</taxon>
        <taxon>Spermatophyta</taxon>
        <taxon>Magnoliopsida</taxon>
        <taxon>eudicotyledons</taxon>
        <taxon>Gunneridae</taxon>
        <taxon>Pentapetalae</taxon>
        <taxon>rosids</taxon>
        <taxon>malvids</taxon>
        <taxon>Brassicales</taxon>
        <taxon>Brassicaceae</taxon>
        <taxon>Camelineae</taxon>
        <taxon>Arabidopsis</taxon>
    </lineage>
</organism>
<feature type="chain" id="PRO_0000458547" description="ASI1-immunoprecipitated protein 2">
    <location>
        <begin position="1"/>
        <end position="994"/>
    </location>
</feature>
<feature type="zinc finger region" description="PHD-type" evidence="1">
    <location>
        <begin position="212"/>
        <end position="263"/>
    </location>
</feature>
<feature type="region of interest" description="Disordered" evidence="2">
    <location>
        <begin position="39"/>
        <end position="182"/>
    </location>
</feature>
<feature type="region of interest" description="Disordered" evidence="2">
    <location>
        <begin position="187"/>
        <end position="206"/>
    </location>
</feature>
<feature type="region of interest" description="Disordered" evidence="2">
    <location>
        <begin position="342"/>
        <end position="567"/>
    </location>
</feature>
<feature type="region of interest" description="Disordered" evidence="2">
    <location>
        <begin position="839"/>
        <end position="875"/>
    </location>
</feature>
<feature type="compositionally biased region" description="Basic and acidic residues" evidence="2">
    <location>
        <begin position="45"/>
        <end position="54"/>
    </location>
</feature>
<feature type="compositionally biased region" description="Polar residues" evidence="2">
    <location>
        <begin position="60"/>
        <end position="102"/>
    </location>
</feature>
<feature type="compositionally biased region" description="Basic and acidic residues" evidence="2">
    <location>
        <begin position="119"/>
        <end position="140"/>
    </location>
</feature>
<feature type="compositionally biased region" description="Basic and acidic residues" evidence="2">
    <location>
        <begin position="148"/>
        <end position="163"/>
    </location>
</feature>
<feature type="compositionally biased region" description="Low complexity" evidence="2">
    <location>
        <begin position="371"/>
        <end position="384"/>
    </location>
</feature>
<feature type="compositionally biased region" description="Polar residues" evidence="2">
    <location>
        <begin position="417"/>
        <end position="435"/>
    </location>
</feature>
<feature type="compositionally biased region" description="Polar residues" evidence="2">
    <location>
        <begin position="449"/>
        <end position="464"/>
    </location>
</feature>
<feature type="compositionally biased region" description="Basic and acidic residues" evidence="2">
    <location>
        <begin position="469"/>
        <end position="478"/>
    </location>
</feature>
<feature type="compositionally biased region" description="Basic and acidic residues" evidence="2">
    <location>
        <begin position="536"/>
        <end position="552"/>
    </location>
</feature>
<feature type="compositionally biased region" description="Basic and acidic residues" evidence="2">
    <location>
        <begin position="858"/>
        <end position="875"/>
    </location>
</feature>
<feature type="binding site" evidence="1">
    <location>
        <position position="215"/>
    </location>
    <ligand>
        <name>Zn(2+)</name>
        <dbReference type="ChEBI" id="CHEBI:29105"/>
        <label>1</label>
    </ligand>
</feature>
<feature type="binding site" evidence="1">
    <location>
        <position position="218"/>
    </location>
    <ligand>
        <name>Zn(2+)</name>
        <dbReference type="ChEBI" id="CHEBI:29105"/>
        <label>1</label>
    </ligand>
</feature>
<feature type="binding site" evidence="1">
    <location>
        <position position="230"/>
    </location>
    <ligand>
        <name>Zn(2+)</name>
        <dbReference type="ChEBI" id="CHEBI:29105"/>
        <label>2</label>
    </ligand>
</feature>
<feature type="binding site" evidence="1">
    <location>
        <position position="233"/>
    </location>
    <ligand>
        <name>Zn(2+)</name>
        <dbReference type="ChEBI" id="CHEBI:29105"/>
        <label>2</label>
    </ligand>
</feature>
<feature type="binding site" evidence="1">
    <location>
        <position position="239"/>
    </location>
    <ligand>
        <name>Zn(2+)</name>
        <dbReference type="ChEBI" id="CHEBI:29105"/>
        <label>1</label>
    </ligand>
</feature>
<feature type="binding site" evidence="1">
    <location>
        <position position="242"/>
    </location>
    <ligand>
        <name>Zn(2+)</name>
        <dbReference type="ChEBI" id="CHEBI:29105"/>
        <label>1</label>
    </ligand>
</feature>
<feature type="binding site" evidence="1">
    <location>
        <position position="257"/>
    </location>
    <ligand>
        <name>Zn(2+)</name>
        <dbReference type="ChEBI" id="CHEBI:29105"/>
        <label>2</label>
    </ligand>
</feature>
<feature type="binding site" evidence="1">
    <location>
        <position position="260"/>
    </location>
    <ligand>
        <name>Zn(2+)</name>
        <dbReference type="ChEBI" id="CHEBI:29105"/>
        <label>2</label>
    </ligand>
</feature>
<dbReference type="EMBL" id="AC018363">
    <property type="protein sequence ID" value="AAF26970.1"/>
    <property type="status" value="ALT_SEQ"/>
    <property type="molecule type" value="Genomic_DNA"/>
</dbReference>
<dbReference type="EMBL" id="CP002686">
    <property type="protein sequence ID" value="AEE73875.1"/>
    <property type="molecule type" value="Genomic_DNA"/>
</dbReference>
<dbReference type="RefSeq" id="NP_186939.2">
    <property type="nucleotide sequence ID" value="NM_111159.3"/>
</dbReference>
<dbReference type="SMR" id="F4IYH6"/>
<dbReference type="FunCoup" id="F4IYH6">
    <property type="interactions" value="1533"/>
</dbReference>
<dbReference type="STRING" id="3702.F4IYH6"/>
<dbReference type="iPTMnet" id="F4IYH6"/>
<dbReference type="PaxDb" id="3702-AT3G02890.1"/>
<dbReference type="ProteomicsDB" id="216599"/>
<dbReference type="EnsemblPlants" id="AT3G02890.1">
    <property type="protein sequence ID" value="AT3G02890.1"/>
    <property type="gene ID" value="AT3G02890"/>
</dbReference>
<dbReference type="GeneID" id="821192"/>
<dbReference type="Gramene" id="AT3G02890.1">
    <property type="protein sequence ID" value="AT3G02890.1"/>
    <property type="gene ID" value="AT3G02890"/>
</dbReference>
<dbReference type="Araport" id="AT3G02890"/>
<dbReference type="TAIR" id="AT3G02890">
    <property type="gene designation" value="AIPP2"/>
</dbReference>
<dbReference type="eggNOG" id="ENOG502QR3S">
    <property type="taxonomic scope" value="Eukaryota"/>
</dbReference>
<dbReference type="HOGENOM" id="CLU_005058_0_0_1"/>
<dbReference type="InParanoid" id="F4IYH6"/>
<dbReference type="OMA" id="MFFFLWG"/>
<dbReference type="OrthoDB" id="787137at2759"/>
<dbReference type="PRO" id="PR:F4IYH6"/>
<dbReference type="Proteomes" id="UP000006548">
    <property type="component" value="Chromosome 3"/>
</dbReference>
<dbReference type="ExpressionAtlas" id="F4IYH6">
    <property type="expression patterns" value="baseline and differential"/>
</dbReference>
<dbReference type="GO" id="GO:0042393">
    <property type="term" value="F:histone binding"/>
    <property type="evidence" value="ECO:0000314"/>
    <property type="project" value="UniProtKB"/>
</dbReference>
<dbReference type="GO" id="GO:0061628">
    <property type="term" value="F:histone H3K27me3 reader activity"/>
    <property type="evidence" value="ECO:0000314"/>
    <property type="project" value="UniProtKB"/>
</dbReference>
<dbReference type="GO" id="GO:0008270">
    <property type="term" value="F:zinc ion binding"/>
    <property type="evidence" value="ECO:0007669"/>
    <property type="project" value="UniProtKB-KW"/>
</dbReference>
<dbReference type="GO" id="GO:0045814">
    <property type="term" value="P:negative regulation of gene expression, epigenetic"/>
    <property type="evidence" value="ECO:0000314"/>
    <property type="project" value="UniProtKB"/>
</dbReference>
<dbReference type="GO" id="GO:0034244">
    <property type="term" value="P:negative regulation of transcription elongation by RNA polymerase II"/>
    <property type="evidence" value="ECO:0000315"/>
    <property type="project" value="UniProtKB"/>
</dbReference>
<dbReference type="GO" id="GO:2000028">
    <property type="term" value="P:regulation of photoperiodism, flowering"/>
    <property type="evidence" value="ECO:0000315"/>
    <property type="project" value="UniProtKB"/>
</dbReference>
<dbReference type="Gene3D" id="3.30.40.10">
    <property type="entry name" value="Zinc/RING finger domain, C3HC4 (zinc finger)"/>
    <property type="match status" value="1"/>
</dbReference>
<dbReference type="InterPro" id="IPR056280">
    <property type="entry name" value="AIPP2-like_SPOC"/>
</dbReference>
<dbReference type="InterPro" id="IPR049914">
    <property type="entry name" value="PHD1-3/5-6"/>
</dbReference>
<dbReference type="InterPro" id="IPR011011">
    <property type="entry name" value="Znf_FYVE_PHD"/>
</dbReference>
<dbReference type="InterPro" id="IPR001965">
    <property type="entry name" value="Znf_PHD"/>
</dbReference>
<dbReference type="InterPro" id="IPR013083">
    <property type="entry name" value="Znf_RING/FYVE/PHD"/>
</dbReference>
<dbReference type="PANTHER" id="PTHR33304">
    <property type="match status" value="1"/>
</dbReference>
<dbReference type="PANTHER" id="PTHR33304:SF58">
    <property type="entry name" value="RING_FYVE_PHD ZINC FINGER SUPERFAMILY PROTEIN"/>
    <property type="match status" value="1"/>
</dbReference>
<dbReference type="Pfam" id="PF23121">
    <property type="entry name" value="SPOC_AIPP2"/>
    <property type="match status" value="1"/>
</dbReference>
<dbReference type="SMART" id="SM00249">
    <property type="entry name" value="PHD"/>
    <property type="match status" value="1"/>
</dbReference>
<dbReference type="SUPFAM" id="SSF57903">
    <property type="entry name" value="FYVE/PHD zinc finger"/>
    <property type="match status" value="1"/>
</dbReference>
<evidence type="ECO:0000255" key="1">
    <source>
        <dbReference type="PROSITE-ProRule" id="PRU00146"/>
    </source>
</evidence>
<evidence type="ECO:0000256" key="2">
    <source>
        <dbReference type="SAM" id="MobiDB-lite"/>
    </source>
</evidence>
<evidence type="ECO:0000269" key="3">
    <source>
    </source>
</evidence>
<evidence type="ECO:0000269" key="4">
    <source>
    </source>
</evidence>
<evidence type="ECO:0000269" key="5">
    <source>
    </source>
</evidence>
<evidence type="ECO:0000303" key="6">
    <source>
    </source>
</evidence>
<evidence type="ECO:0000303" key="7">
    <source>
    </source>
</evidence>
<evidence type="ECO:0000305" key="8"/>
<evidence type="ECO:0000312" key="9">
    <source>
        <dbReference type="Araport" id="AT3G02890"/>
    </source>
</evidence>
<evidence type="ECO:0000312" key="10">
    <source>
        <dbReference type="EMBL" id="AAF26970.1"/>
    </source>
</evidence>
<proteinExistence type="evidence at protein level"/>
<keyword id="KW-0479">Metal-binding</keyword>
<keyword id="KW-1185">Reference proteome</keyword>
<keyword id="KW-0804">Transcription</keyword>
<keyword id="KW-0805">Transcription regulation</keyword>
<keyword id="KW-0862">Zinc</keyword>
<keyword id="KW-0863">Zinc-finger</keyword>
<accession>F4IYH6</accession>
<accession>Q9M8T1</accession>
<name>AIPP2_ARATH</name>
<comment type="function">
    <text evidence="3 4 5">Together with AIPP3/BDT1 and PAIPP2, cooperates to form a BAH-PHD bivalent histone reader complex able to read histone H3 lysine 27 trimethylation (H3K27me3) and low-methylated H3K4 histone marks in order to regulate transcription, especially to prevent early flowering; promotes AIPP3/BDT1 binding to H3K27me3 (PubMed:33277495, PubMed:33433058). CPL2 is subsequently recruited to form a BAH-PHD-CPL2 complex (BPC) in order to silence several H3K27me3 and low-methylated H3K4 enriched loci, including AGO5, via the phosphorylation state-dependent inhibition of Pol II release from the transcriptional start site (e.g. Ser5P-Pol II dephosphorylation) (PubMed:33277495). The BPC complex represses flowering by inhibiting the expression of several genes, including AGL6, FT, FUL and SOC1 (PubMed:33277495). Prevents the accumulation of intronic heterochromatin-containing genes (e.g. IBM1, At3g05410 and RPP7) (PubMed:28808009).</text>
</comment>
<comment type="subunit">
    <text evidence="3 4 5">Component of the ASI1-AIPP1-EDM2 (AAE) RNA regulatory complex composed of at least AIPP1/EDM3, ASI1 and EDM2 and may contain CPL2, AIPP2 and AIPP3/BDT1 (PubMed:28808009). Part of the BAH-PHD bivalent histone reader complex that contains AIPP2, PAIPP2 and AIPP3/BDT1; the BAH-PHD module associates with CPL2 to form the BAH-PHD-CPL2 complex (BPC) for transcriptional repression (PubMed:33277495). Binds directly to ASI1, AIPP3/BDT1 and CPL2 but not to PAIPP2 (PubMed:28808009, PubMed:33277495, PubMed:33433058).</text>
</comment>
<comment type="tissue specificity">
    <text evidence="4">Expressed ubiquitously.</text>
</comment>
<comment type="domain">
    <text evidence="4">The PHD domain (212-263) recognizes specifically unmodified histone H3 lysine 4 (H3K4me0), binding affinity being inversely proportional to H3K4 methylation level.</text>
</comment>
<comment type="disruption phenotype">
    <text evidence="3 4 5">No obvious developmental defects (PubMed:33433058). Enhanced accumulation of intronic heterochromatin (HC)-containing genes functional full-length transcripts (e.g. IBM1, At3g05410 and RPP7) (PubMed:28808009). Increased expression of At4g16870, a transposable element (TE) of Copia-like retrotransposon origin, associated with methylated status (PubMed:28808009). The double mutant aipp2-1 paipp2-1 exhibits multiple developmental defects, such as a dwarfed size, early flowering, small leaves and poor fertility (PubMed:33277495). Abnormally up-regulated expression of many genes localized at H3K27me3 and low-methylated H3K4 enriched loci associated with a higher accumulation of activated RNA polymerase II phosphorylated at 'Ser-5' (Ser5P-Pol II) in the double mutant aipp2-1 paipp2-1 (PubMed:33277495). Plants missing all PHD finger-containing proteins (e.g. PHD1, PAIPP2/PHD2, AIPP2/PHD3, PHD4, PHD5 and PHD6) exhibit an increased expression of flowering genes leading to an early flowering phenotype under long-day conditions as well as growth retardation (PubMed:33433058).</text>
</comment>
<comment type="sequence caution" evidence="8">
    <conflict type="erroneous gene model prediction">
        <sequence resource="EMBL-CDS" id="AAF26970"/>
    </conflict>
</comment>
<protein>
    <recommendedName>
        <fullName evidence="6">ASI1-immunoprecipitated protein 2</fullName>
    </recommendedName>
    <alternativeName>
        <fullName evidence="7">PHD finger-containing protein 3</fullName>
    </alternativeName>
</protein>
<reference key="1">
    <citation type="journal article" date="2000" name="Nature">
        <title>Sequence and analysis of chromosome 3 of the plant Arabidopsis thaliana.</title>
        <authorList>
            <person name="Salanoubat M."/>
            <person name="Lemcke K."/>
            <person name="Rieger M."/>
            <person name="Ansorge W."/>
            <person name="Unseld M."/>
            <person name="Fartmann B."/>
            <person name="Valle G."/>
            <person name="Bloecker H."/>
            <person name="Perez-Alonso M."/>
            <person name="Obermaier B."/>
            <person name="Delseny M."/>
            <person name="Boutry M."/>
            <person name="Grivell L.A."/>
            <person name="Mache R."/>
            <person name="Puigdomenech P."/>
            <person name="De Simone V."/>
            <person name="Choisne N."/>
            <person name="Artiguenave F."/>
            <person name="Robert C."/>
            <person name="Brottier P."/>
            <person name="Wincker P."/>
            <person name="Cattolico L."/>
            <person name="Weissenbach J."/>
            <person name="Saurin W."/>
            <person name="Quetier F."/>
            <person name="Schaefer M."/>
            <person name="Mueller-Auer S."/>
            <person name="Gabel C."/>
            <person name="Fuchs M."/>
            <person name="Benes V."/>
            <person name="Wurmbach E."/>
            <person name="Drzonek H."/>
            <person name="Erfle H."/>
            <person name="Jordan N."/>
            <person name="Bangert S."/>
            <person name="Wiedelmann R."/>
            <person name="Kranz H."/>
            <person name="Voss H."/>
            <person name="Holland R."/>
            <person name="Brandt P."/>
            <person name="Nyakatura G."/>
            <person name="Vezzi A."/>
            <person name="D'Angelo M."/>
            <person name="Pallavicini A."/>
            <person name="Toppo S."/>
            <person name="Simionati B."/>
            <person name="Conrad A."/>
            <person name="Hornischer K."/>
            <person name="Kauer G."/>
            <person name="Loehnert T.-H."/>
            <person name="Nordsiek G."/>
            <person name="Reichelt J."/>
            <person name="Scharfe M."/>
            <person name="Schoen O."/>
            <person name="Bargues M."/>
            <person name="Terol J."/>
            <person name="Climent J."/>
            <person name="Navarro P."/>
            <person name="Collado C."/>
            <person name="Perez-Perez A."/>
            <person name="Ottenwaelder B."/>
            <person name="Duchemin D."/>
            <person name="Cooke R."/>
            <person name="Laudie M."/>
            <person name="Berger-Llauro C."/>
            <person name="Purnelle B."/>
            <person name="Masuy D."/>
            <person name="de Haan M."/>
            <person name="Maarse A.C."/>
            <person name="Alcaraz J.-P."/>
            <person name="Cottet A."/>
            <person name="Casacuberta E."/>
            <person name="Monfort A."/>
            <person name="Argiriou A."/>
            <person name="Flores M."/>
            <person name="Liguori R."/>
            <person name="Vitale D."/>
            <person name="Mannhaupt G."/>
            <person name="Haase D."/>
            <person name="Schoof H."/>
            <person name="Rudd S."/>
            <person name="Zaccaria P."/>
            <person name="Mewes H.-W."/>
            <person name="Mayer K.F.X."/>
            <person name="Kaul S."/>
            <person name="Town C.D."/>
            <person name="Koo H.L."/>
            <person name="Tallon L.J."/>
            <person name="Jenkins J."/>
            <person name="Rooney T."/>
            <person name="Rizzo M."/>
            <person name="Walts A."/>
            <person name="Utterback T."/>
            <person name="Fujii C.Y."/>
            <person name="Shea T.P."/>
            <person name="Creasy T.H."/>
            <person name="Haas B."/>
            <person name="Maiti R."/>
            <person name="Wu D."/>
            <person name="Peterson J."/>
            <person name="Van Aken S."/>
            <person name="Pai G."/>
            <person name="Militscher J."/>
            <person name="Sellers P."/>
            <person name="Gill J.E."/>
            <person name="Feldblyum T.V."/>
            <person name="Preuss D."/>
            <person name="Lin X."/>
            <person name="Nierman W.C."/>
            <person name="Salzberg S.L."/>
            <person name="White O."/>
            <person name="Venter J.C."/>
            <person name="Fraser C.M."/>
            <person name="Kaneko T."/>
            <person name="Nakamura Y."/>
            <person name="Sato S."/>
            <person name="Kato T."/>
            <person name="Asamizu E."/>
            <person name="Sasamoto S."/>
            <person name="Kimura T."/>
            <person name="Idesawa K."/>
            <person name="Kawashima K."/>
            <person name="Kishida Y."/>
            <person name="Kiyokawa C."/>
            <person name="Kohara M."/>
            <person name="Matsumoto M."/>
            <person name="Matsuno A."/>
            <person name="Muraki A."/>
            <person name="Nakayama S."/>
            <person name="Nakazaki N."/>
            <person name="Shinpo S."/>
            <person name="Takeuchi C."/>
            <person name="Wada T."/>
            <person name="Watanabe A."/>
            <person name="Yamada M."/>
            <person name="Yasuda M."/>
            <person name="Tabata S."/>
        </authorList>
    </citation>
    <scope>NUCLEOTIDE SEQUENCE [LARGE SCALE GENOMIC DNA]</scope>
    <source>
        <strain>cv. Columbia</strain>
    </source>
</reference>
<reference key="2">
    <citation type="journal article" date="2017" name="Plant J.">
        <title>Araport11: a complete reannotation of the Arabidopsis thaliana reference genome.</title>
        <authorList>
            <person name="Cheng C.Y."/>
            <person name="Krishnakumar V."/>
            <person name="Chan A.P."/>
            <person name="Thibaud-Nissen F."/>
            <person name="Schobel S."/>
            <person name="Town C.D."/>
        </authorList>
    </citation>
    <scope>GENOME REANNOTATION</scope>
    <source>
        <strain>cv. Columbia</strain>
    </source>
</reference>
<reference key="3">
    <citation type="journal article" date="2017" name="Proc. Natl. Acad. Sci. U.S.A.">
        <title>A protein complex regulates RNA processing of intronic heterochromatin-containing genes in Arabidopsis.</title>
        <authorList>
            <person name="Duan C.-G."/>
            <person name="Wang X."/>
            <person name="Zhang L."/>
            <person name="Xiong X."/>
            <person name="Zhang Z."/>
            <person name="Tang K."/>
            <person name="Pan L."/>
            <person name="Hsu C.-C."/>
            <person name="Xu H."/>
            <person name="Tao W.A."/>
            <person name="Zhang H."/>
            <person name="Zhu J.-K."/>
        </authorList>
    </citation>
    <scope>FUNCTION</scope>
    <scope>DISRUPTION PHENOTYPE</scope>
    <scope>SUBUNIT</scope>
    <scope>INTERACTION WITH ASI1; AIPP3/BDT1 AND CPL2</scope>
    <source>
        <strain>cv. Columbia</strain>
    </source>
</reference>
<reference key="4">
    <citation type="journal article" date="2020" name="Nat. Commun.">
        <title>Coupling of H3K27me3 recognition with transcriptional repression through the BAH-PHD-CPL2 complex in Arabidopsis.</title>
        <authorList>
            <person name="Zhang Y.-Z."/>
            <person name="Yuan J."/>
            <person name="Zhang L."/>
            <person name="Chen C."/>
            <person name="Wang Y."/>
            <person name="Zhang G."/>
            <person name="Peng L."/>
            <person name="Xie S.-S."/>
            <person name="Jiang J."/>
            <person name="Zhu J.-K."/>
            <person name="Du J."/>
            <person name="Duan C.-G."/>
        </authorList>
    </citation>
    <scope>FUNCTION</scope>
    <scope>DISRUPTION PHENOTYPE</scope>
    <scope>SUBUNIT</scope>
    <scope>INTERACTION WITH AIPP3/BDT1 AND CPL2</scope>
    <scope>TISSUE SPECIFICITY</scope>
    <source>
        <strain>cv. Columbia</strain>
    </source>
</reference>
<reference key="5">
    <citation type="journal article" date="2021" name="J. Integr. Plant Biol.">
        <title>A histone H3K27me3 reader cooperates with a family of PHD finger-containing proteins to regulate flowering time in Arabidopsis.</title>
        <authorList>
            <person name="Qian F."/>
            <person name="Zhao Q.-Y."/>
            <person name="Zhang T.-N."/>
            <person name="Li Y.-L."/>
            <person name="Su Y.-N."/>
            <person name="Li L."/>
            <person name="Sui J.-H."/>
            <person name="Chen S."/>
            <person name="He X.-J."/>
        </authorList>
    </citation>
    <scope>FUNCTION</scope>
    <scope>DISRUPTION PHENOTYPE</scope>
    <scope>INTERACTION WITH AIPP3/BDT1</scope>
    <source>
        <strain>cv. Columbia</strain>
    </source>
</reference>
<sequence length="994" mass="108865">MADRRVGNRPMGRRGRLEIQSGTCNVCSAPCSSCMHHNAEFSGSKSDESSDENSHGVLASQCSFNGDNLLRSSGVNAPGSSHNTSSEASHLVNSNHDTSSENAESKEIIRSSDISHGPLLDRPHKDQDSMKVDSCNDHQARSTLGQGKVKEKSGAKNNEEKKNTLTGSSKHSGPRVGKSGENVLLNKADESNTSAMSDSESENDPEMLELDVKVCDTCGDAGREDLLAICSRCSDGAEHTYCMRVMLKKVPKGYWLCEECKFAEKAEKHKLETKRKRESEVNVNTQISSKRHIDKFEAVPDSKRLAVGAQIGSPKRSVLPRMSTLSRETSFKGLEKPTRKLAHYSSFNSHSSDDTESTRSTDSQLQSPKGSFLKSNSFNSLSSRSKVRPVDDDMLPRQKTGNENSSLEVKEGFSKNVGKSMSSRCIDVGSSNCNDSKVKGSKQLKDWSTEANPSASISRGNSSIPYAKSPRDLKDLQSDGKQGSLSKQARHLSRNRLEDIVASVGDSSKNEKCSSSEQISSEAKCKDELAQVDGVPRSREFREAGEKTKDAVGNHQKRNIGEDNNKGNRLRAAVDAALRKKPSFSKNRGLEQSDLPPVSNVDSGCNKALKCLSSKVPVIRDWPVGFQGLPGGHPNLRTDKQTNTVNEKQFTLAGTDATTASQSVEPEVNDPSVQSVMRDLPVAAPNVLSTTSAIPKPEYIWQGDLEVQKSRNLSAMHSGIQAYLSTLASPKVVEVVKQFPEKVTLNEVPRLSSWPAQFQDTGAKEQHVALFFFAKDIESYEKNYKPLVDNMIQKDLALKGNLEGVELLIFASNQLPQDCQRWNMLFFLWGVFRGKKESCSNPPKNTPLPASCVSPNRDTFRHENPSNKKSLTDRTLSRMQSCMKEEDAKEGKACSGTEKENAFSVSYGEGEVDVETEEGEIGVSPQLKYEKTAGPGTVKSADMNQRVNVDDLNKEGLCEGPANKKLKTVTGVETGCSIVRRDTSVHKFASRKFV</sequence>
<gene>
    <name evidence="6" type="primary">AIPP2</name>
    <name evidence="7" type="synonym">PHD3</name>
    <name evidence="9" type="ordered locus">At3g02890</name>
    <name evidence="10" type="ORF">F13E7.16</name>
</gene>